<feature type="chain" id="PRO_0000097561" description="SIT4-associating protein SAP155">
    <location>
        <begin position="1"/>
        <end position="1002"/>
    </location>
</feature>
<feature type="region of interest" description="Disordered" evidence="1">
    <location>
        <begin position="51"/>
        <end position="131"/>
    </location>
</feature>
<feature type="region of interest" description="Disordered" evidence="1">
    <location>
        <begin position="214"/>
        <end position="273"/>
    </location>
</feature>
<feature type="region of interest" description="Disordered" evidence="1">
    <location>
        <begin position="609"/>
        <end position="645"/>
    </location>
</feature>
<feature type="region of interest" description="Disordered" evidence="1">
    <location>
        <begin position="868"/>
        <end position="901"/>
    </location>
</feature>
<feature type="region of interest" description="Disordered" evidence="1">
    <location>
        <begin position="940"/>
        <end position="1002"/>
    </location>
</feature>
<feature type="compositionally biased region" description="Basic and acidic residues" evidence="1">
    <location>
        <begin position="62"/>
        <end position="97"/>
    </location>
</feature>
<feature type="compositionally biased region" description="Low complexity" evidence="1">
    <location>
        <begin position="98"/>
        <end position="114"/>
    </location>
</feature>
<feature type="compositionally biased region" description="Acidic residues" evidence="1">
    <location>
        <begin position="220"/>
        <end position="241"/>
    </location>
</feature>
<feature type="compositionally biased region" description="Acidic residues" evidence="1">
    <location>
        <begin position="262"/>
        <end position="273"/>
    </location>
</feature>
<feature type="compositionally biased region" description="Basic and acidic residues" evidence="1">
    <location>
        <begin position="609"/>
        <end position="626"/>
    </location>
</feature>
<feature type="compositionally biased region" description="Acidic residues" evidence="1">
    <location>
        <begin position="635"/>
        <end position="645"/>
    </location>
</feature>
<feature type="compositionally biased region" description="Polar residues" evidence="1">
    <location>
        <begin position="868"/>
        <end position="885"/>
    </location>
</feature>
<feature type="compositionally biased region" description="Low complexity" evidence="1">
    <location>
        <begin position="956"/>
        <end position="976"/>
    </location>
</feature>
<feature type="compositionally biased region" description="Acidic residues" evidence="1">
    <location>
        <begin position="991"/>
        <end position="1002"/>
    </location>
</feature>
<feature type="modified residue" description="Phosphoserine" evidence="8">
    <location>
        <position position="58"/>
    </location>
</feature>
<feature type="modified residue" description="Phosphoserine" evidence="9">
    <location>
        <position position="255"/>
    </location>
</feature>
<feature type="modified residue" description="Phosphothreonine" evidence="7">
    <location>
        <position position="613"/>
    </location>
</feature>
<feature type="modified residue" description="Phosphothreonine" evidence="7">
    <location>
        <position position="618"/>
    </location>
</feature>
<feature type="sequence conflict" description="In Ref. 3 and 4; BAA09279." evidence="6" ref="3 4">
    <original>N</original>
    <variation>T</variation>
    <location>
        <position position="663"/>
    </location>
</feature>
<feature type="sequence conflict" description="In Ref. 2; CAC42243." evidence="6" ref="2">
    <original>T</original>
    <variation>G</variation>
    <location>
        <position position="668"/>
    </location>
</feature>
<feature type="sequence conflict" description="In Ref. 1; AA sequence." evidence="6" ref="1">
    <original>DLFKIKLYDTRIVSKIM</original>
    <variation>TYSKSNYMIRDCFQNN</variation>
    <location>
        <begin position="674"/>
        <end position="690"/>
    </location>
</feature>
<feature type="sequence conflict" description="In Ref. 1; AAC49303." evidence="6" ref="1">
    <original>ELISPDIQVI</original>
    <variation>DYISRYSSN</variation>
    <location>
        <begin position="815"/>
        <end position="824"/>
    </location>
</feature>
<proteinExistence type="evidence at protein level"/>
<reference key="1">
    <citation type="journal article" date="1996" name="Mol. Cell. Biol.">
        <title>The SAPs, a new family of proteins, associate and function positively with the SIT4 phosphatase.</title>
        <authorList>
            <person name="Luke M.M."/>
            <person name="della Seta F."/>
            <person name="di Como C.J."/>
            <person name="Sugimoto H."/>
            <person name="Kobayashi R."/>
            <person name="Arndt K.T."/>
        </authorList>
    </citation>
    <scope>NUCLEOTIDE SEQUENCE [GENOMIC DNA]</scope>
    <scope>PARTIAL PROTEIN SEQUENCE</scope>
    <scope>INTERACTION WITH SIT4</scope>
    <scope>PHOSPHORYLATION</scope>
</reference>
<reference key="2">
    <citation type="journal article" date="2001" name="Genetics">
        <title>Sit4p protein phosphatase is required for sensitivity of Saccharomyces cerevisiae to Kluyveromyces lactis zymocin.</title>
        <authorList>
            <person name="Jablonowski D."/>
            <person name="Butler A.R."/>
            <person name="Fichtner L."/>
            <person name="Gardiner D."/>
            <person name="Schaffrath R."/>
            <person name="Stark M.J.R."/>
        </authorList>
    </citation>
    <scope>NUCLEOTIDE SEQUENCE [GENOMIC DNA]</scope>
    <scope>IDENTIFICATION OF FRAMESHIFT</scope>
</reference>
<reference key="3">
    <citation type="journal article" date="1996" name="Yeast">
        <title>Analysis of a 36.2 kb DNA sequence including the right telomere of chromosome VI from Saccharomyces cerevisiae.</title>
        <authorList>
            <person name="Eki T."/>
            <person name="Naitou M."/>
            <person name="Hagiwara H."/>
            <person name="Ozawa M."/>
            <person name="Sasanuma S."/>
            <person name="Sasanuma M."/>
            <person name="Tsuchiya Y."/>
            <person name="Shibata T."/>
            <person name="Hanaoka F."/>
            <person name="Murakami Y."/>
        </authorList>
    </citation>
    <scope>NUCLEOTIDE SEQUENCE [GENOMIC DNA]</scope>
    <source>
        <strain>ATCC 204511 / S288c / AB972</strain>
    </source>
</reference>
<reference key="4">
    <citation type="journal article" date="1995" name="Nat. Genet.">
        <title>Analysis of the nucleotide sequence of chromosome VI from Saccharomyces cerevisiae.</title>
        <authorList>
            <person name="Murakami Y."/>
            <person name="Naitou M."/>
            <person name="Hagiwara H."/>
            <person name="Shibata T."/>
            <person name="Ozawa M."/>
            <person name="Sasanuma S."/>
            <person name="Sasanuma M."/>
            <person name="Tsuchiya Y."/>
            <person name="Soeda E."/>
            <person name="Yokoyama K."/>
            <person name="Yamazaki M."/>
            <person name="Tashiro H."/>
            <person name="Eki T."/>
        </authorList>
    </citation>
    <scope>NUCLEOTIDE SEQUENCE [LARGE SCALE GENOMIC DNA]</scope>
    <source>
        <strain>ATCC 204508 / S288c</strain>
    </source>
</reference>
<reference key="5">
    <citation type="journal article" date="2014" name="G3 (Bethesda)">
        <title>The reference genome sequence of Saccharomyces cerevisiae: Then and now.</title>
        <authorList>
            <person name="Engel S.R."/>
            <person name="Dietrich F.S."/>
            <person name="Fisk D.G."/>
            <person name="Binkley G."/>
            <person name="Balakrishnan R."/>
            <person name="Costanzo M.C."/>
            <person name="Dwight S.S."/>
            <person name="Hitz B.C."/>
            <person name="Karra K."/>
            <person name="Nash R.S."/>
            <person name="Weng S."/>
            <person name="Wong E.D."/>
            <person name="Lloyd P."/>
            <person name="Skrzypek M.S."/>
            <person name="Miyasato S.R."/>
            <person name="Simison M."/>
            <person name="Cherry J.M."/>
        </authorList>
    </citation>
    <scope>GENOME REANNOTATION</scope>
    <scope>SEQUENCE REVISION TO 663</scope>
    <source>
        <strain>ATCC 204508 / S288c</strain>
    </source>
</reference>
<reference key="6">
    <citation type="journal article" date="2003" name="Nature">
        <title>Global analysis of protein localization in budding yeast.</title>
        <authorList>
            <person name="Huh W.-K."/>
            <person name="Falvo J.V."/>
            <person name="Gerke L.C."/>
            <person name="Carroll A.S."/>
            <person name="Howson R.W."/>
            <person name="Weissman J.S."/>
            <person name="O'Shea E.K."/>
        </authorList>
    </citation>
    <scope>SUBCELLULAR LOCATION [LARGE SCALE ANALYSIS]</scope>
</reference>
<reference key="7">
    <citation type="journal article" date="2003" name="Nature">
        <title>Global analysis of protein expression in yeast.</title>
        <authorList>
            <person name="Ghaemmaghami S."/>
            <person name="Huh W.-K."/>
            <person name="Bower K."/>
            <person name="Howson R.W."/>
            <person name="Belle A."/>
            <person name="Dephoure N."/>
            <person name="O'Shea E.K."/>
            <person name="Weissman J.S."/>
        </authorList>
    </citation>
    <scope>LEVEL OF PROTEIN EXPRESSION [LARGE SCALE ANALYSIS]</scope>
</reference>
<reference key="8">
    <citation type="journal article" date="2004" name="Mol. Cell. Biol.">
        <title>TOR controls transcriptional and translational programs via Sap-Sit4 protein phosphatase signaling effectors.</title>
        <authorList>
            <person name="Rohde J.R."/>
            <person name="Campbell S."/>
            <person name="Zurita-Martinez S.A."/>
            <person name="Cutler N.S."/>
            <person name="Ashe M."/>
            <person name="Cardenas M.E."/>
        </authorList>
    </citation>
    <scope>FUNCTION</scope>
</reference>
<reference key="9">
    <citation type="journal article" date="2005" name="Eukaryot. Cell">
        <title>Ability of Sit4p to promote K+ efflux via Nha1p is modulated by Sap155p and Sap185p.</title>
        <authorList>
            <person name="Manlandro C.M.A."/>
            <person name="Haydon D.H."/>
            <person name="Rosenwald A.G."/>
        </authorList>
    </citation>
    <scope>FUNCTION</scope>
</reference>
<reference key="10">
    <citation type="journal article" date="2007" name="Proc. Natl. Acad. Sci. U.S.A.">
        <title>Analysis of phosphorylation sites on proteins from Saccharomyces cerevisiae by electron transfer dissociation (ETD) mass spectrometry.</title>
        <authorList>
            <person name="Chi A."/>
            <person name="Huttenhower C."/>
            <person name="Geer L.Y."/>
            <person name="Coon J.J."/>
            <person name="Syka J.E.P."/>
            <person name="Bai D.L."/>
            <person name="Shabanowitz J."/>
            <person name="Burke D.J."/>
            <person name="Troyanskaya O.G."/>
            <person name="Hunt D.F."/>
        </authorList>
    </citation>
    <scope>PHOSPHORYLATION [LARGE SCALE ANALYSIS] AT THR-613 AND THR-618</scope>
    <scope>IDENTIFICATION BY MASS SPECTROMETRY [LARGE SCALE ANALYSIS]</scope>
</reference>
<reference key="11">
    <citation type="journal article" date="2008" name="Mol. Cell. Proteomics">
        <title>A multidimensional chromatography technology for in-depth phosphoproteome analysis.</title>
        <authorList>
            <person name="Albuquerque C.P."/>
            <person name="Smolka M.B."/>
            <person name="Payne S.H."/>
            <person name="Bafna V."/>
            <person name="Eng J."/>
            <person name="Zhou H."/>
        </authorList>
    </citation>
    <scope>PHOSPHORYLATION [LARGE SCALE ANALYSIS] AT SER-58</scope>
    <scope>IDENTIFICATION BY MASS SPECTROMETRY [LARGE SCALE ANALYSIS]</scope>
</reference>
<reference key="12">
    <citation type="journal article" date="2009" name="Science">
        <title>Global analysis of Cdk1 substrate phosphorylation sites provides insights into evolution.</title>
        <authorList>
            <person name="Holt L.J."/>
            <person name="Tuch B.B."/>
            <person name="Villen J."/>
            <person name="Johnson A.D."/>
            <person name="Gygi S.P."/>
            <person name="Morgan D.O."/>
        </authorList>
    </citation>
    <scope>PHOSPHORYLATION [LARGE SCALE ANALYSIS] AT SER-255</scope>
    <scope>IDENTIFICATION BY MASS SPECTROMETRY [LARGE SCALE ANALYSIS]</scope>
</reference>
<accession>P43612</accession>
<accession>D6VTS3</accession>
<accession>Q96VG4</accession>
<dbReference type="EMBL" id="U50560">
    <property type="protein sequence ID" value="AAC49303.1"/>
    <property type="molecule type" value="Genomic_DNA"/>
</dbReference>
<dbReference type="EMBL" id="AJ318331">
    <property type="protein sequence ID" value="CAC42243.1"/>
    <property type="molecule type" value="Genomic_DNA"/>
</dbReference>
<dbReference type="EMBL" id="D50617">
    <property type="protein sequence ID" value="BAA09279.1"/>
    <property type="status" value="ALT_FRAME"/>
    <property type="molecule type" value="Genomic_DNA"/>
</dbReference>
<dbReference type="EMBL" id="BK006940">
    <property type="protein sequence ID" value="DAA12483.2"/>
    <property type="molecule type" value="Genomic_DNA"/>
</dbReference>
<dbReference type="RefSeq" id="NP_116698.3">
    <property type="nucleotide sequence ID" value="NM_001180005.2"/>
</dbReference>
<dbReference type="BioGRID" id="31198">
    <property type="interactions" value="353"/>
</dbReference>
<dbReference type="ComplexPortal" id="CPX-1864">
    <property type="entry name" value="SIT4-SAP155 phosphatase complex"/>
</dbReference>
<dbReference type="DIP" id="DIP-5852N"/>
<dbReference type="FunCoup" id="P43612">
    <property type="interactions" value="886"/>
</dbReference>
<dbReference type="IntAct" id="P43612">
    <property type="interactions" value="46"/>
</dbReference>
<dbReference type="MINT" id="P43612"/>
<dbReference type="STRING" id="4932.YFR040W"/>
<dbReference type="iPTMnet" id="P43612"/>
<dbReference type="PaxDb" id="4932-YFR040W"/>
<dbReference type="PeptideAtlas" id="P43612"/>
<dbReference type="EnsemblFungi" id="YFR040W_mRNA">
    <property type="protein sequence ID" value="YFR040W"/>
    <property type="gene ID" value="YFR040W"/>
</dbReference>
<dbReference type="GeneID" id="850601"/>
<dbReference type="KEGG" id="sce:YFR040W"/>
<dbReference type="AGR" id="SGD:S000001936"/>
<dbReference type="SGD" id="S000001936">
    <property type="gene designation" value="SAP155"/>
</dbReference>
<dbReference type="VEuPathDB" id="FungiDB:YFR040W"/>
<dbReference type="eggNOG" id="KOG2073">
    <property type="taxonomic scope" value="Eukaryota"/>
</dbReference>
<dbReference type="GeneTree" id="ENSGT00390000009899"/>
<dbReference type="HOGENOM" id="CLU_003676_2_1_1"/>
<dbReference type="InParanoid" id="P43612"/>
<dbReference type="OMA" id="SDYDLNC"/>
<dbReference type="OrthoDB" id="295029at2759"/>
<dbReference type="BioCyc" id="YEAST:G3O-30487-MONOMER"/>
<dbReference type="Reactome" id="R-SCE-204005">
    <property type="pathway name" value="COPII-mediated vesicle transport"/>
</dbReference>
<dbReference type="BioGRID-ORCS" id="850601">
    <property type="hits" value="10 hits in 10 CRISPR screens"/>
</dbReference>
<dbReference type="PRO" id="PR:P43612"/>
<dbReference type="Proteomes" id="UP000002311">
    <property type="component" value="Chromosome VI"/>
</dbReference>
<dbReference type="RNAct" id="P43612">
    <property type="molecule type" value="protein"/>
</dbReference>
<dbReference type="GO" id="GO:0005829">
    <property type="term" value="C:cytosol"/>
    <property type="evidence" value="ECO:0000318"/>
    <property type="project" value="GO_Central"/>
</dbReference>
<dbReference type="GO" id="GO:0005634">
    <property type="term" value="C:nucleus"/>
    <property type="evidence" value="ECO:0000318"/>
    <property type="project" value="GO_Central"/>
</dbReference>
<dbReference type="GO" id="GO:0008287">
    <property type="term" value="C:protein serine/threonine phosphatase complex"/>
    <property type="evidence" value="ECO:0000353"/>
    <property type="project" value="ComplexPortal"/>
</dbReference>
<dbReference type="GO" id="GO:0005684">
    <property type="term" value="C:U2-type spliceosomal complex"/>
    <property type="evidence" value="ECO:0000247"/>
    <property type="project" value="SGD"/>
</dbReference>
<dbReference type="GO" id="GO:0019903">
    <property type="term" value="F:protein phosphatase binding"/>
    <property type="evidence" value="ECO:0007669"/>
    <property type="project" value="InterPro"/>
</dbReference>
<dbReference type="GO" id="GO:0019888">
    <property type="term" value="F:protein phosphatase regulator activity"/>
    <property type="evidence" value="ECO:0000318"/>
    <property type="project" value="GO_Central"/>
</dbReference>
<dbReference type="GO" id="GO:0000082">
    <property type="term" value="P:G1/S transition of mitotic cell cycle"/>
    <property type="evidence" value="ECO:0000315"/>
    <property type="project" value="SGD"/>
</dbReference>
<dbReference type="GO" id="GO:1903765">
    <property type="term" value="P:negative regulation of potassium ion export across plasma membrane"/>
    <property type="evidence" value="ECO:0000314"/>
    <property type="project" value="SGD"/>
</dbReference>
<dbReference type="GO" id="GO:0009966">
    <property type="term" value="P:regulation of signal transduction"/>
    <property type="evidence" value="ECO:0000318"/>
    <property type="project" value="GO_Central"/>
</dbReference>
<dbReference type="InterPro" id="IPR007587">
    <property type="entry name" value="SAPS"/>
</dbReference>
<dbReference type="PANTHER" id="PTHR12634">
    <property type="entry name" value="SIT4 YEAST -ASSOCIATING PROTEIN-RELATED"/>
    <property type="match status" value="1"/>
</dbReference>
<dbReference type="PANTHER" id="PTHR12634:SF14">
    <property type="entry name" value="SIT4-ASSOCIATING PROTEIN SAP155-RELATED"/>
    <property type="match status" value="1"/>
</dbReference>
<dbReference type="Pfam" id="PF04499">
    <property type="entry name" value="SAPS"/>
    <property type="match status" value="1"/>
</dbReference>
<organism>
    <name type="scientific">Saccharomyces cerevisiae (strain ATCC 204508 / S288c)</name>
    <name type="common">Baker's yeast</name>
    <dbReference type="NCBI Taxonomy" id="559292"/>
    <lineage>
        <taxon>Eukaryota</taxon>
        <taxon>Fungi</taxon>
        <taxon>Dikarya</taxon>
        <taxon>Ascomycota</taxon>
        <taxon>Saccharomycotina</taxon>
        <taxon>Saccharomycetes</taxon>
        <taxon>Saccharomycetales</taxon>
        <taxon>Saccharomycetaceae</taxon>
        <taxon>Saccharomyces</taxon>
    </lineage>
</organism>
<sequence length="1002" mass="115002">MSFWPFGQNLNHSNINKILDEYFHVLHELERINPSVGKAIPAIFNNVQERGTSDSLDSIPEEYSHGDEVKTARGDQKSRFEKDDQQERYEKEEEERSMNSSESSTTSFSSGSTSKTDLDEEDISNATAPMMVTTKNLDNSFIERMLVETELLNELSRQNKTLLDFICFGFFFDKKTNKKVNNMEYLVDQLMECISKIKTATTVDLNNLIDYQEQQQLDDSSQEDVYVESDTEQEEEKEDDNNSNNKKRRKRGSSSFGNDDINNNDDDDDANEDDESAYLTKATIISEIFSLDIWLISESLVKNQSYLNKIWSIINQPNFNSENSPLVPIFLKINQNLLLTRQDQYLNFIRTERSFVDDMLKHVDISLLMDFFLKIISTDKIESPTGIIELVYDQNLISKCLSFLNNKESPADIQACVGDFLKALIAISANAPLDDISIGPNSLTRQLASPESIAKLVDIMINQRGAALNTTVSIVIELIRKNNSDYDQVNLLTTTIKTHPPSNRDPIYLGYLLRKFSNHLSDFFQIILDIENDANIPLHENQLHEKFKPLGFERFKVVELIAELLHCSNMGLMNSKRAERIARRRDKVRSQLSHHLQDALNDLSIEEKEQLKTKHSPTRDTDHDLKNNNGKIDNDNNDNDDESDYGDEIDESFEIPYINMKQNIKLRTDPTVGDLFKIKLYDTRIVSKIMELFLTHPWNNFWHNVIFDIIQQIFNGRMDFSYNSFLVLSLFNLKSSYQFMTDIVISDEKGTDVSRFSPVIRDPNFDFKITTDFILRGYQDSYKFYELRKMNLGYMGHIVLIAEEVVKFSKLYKVELISPDIQVILQTEEWQYYSEEVLNETRMMYSKILGGGSYIDDGNGNIIPQLPDNTTVLTPNGDASNNNEILDSDTGSSNGTSGGGQLINVESLEEQLSLSTESDLHNKLREMLINRAQEDVDNKNTENGVFILGPPEDKNSNSNINNTNHNSNNSNNNDNNDNNDNDNDNTRNYNEDADNDNDYDHE</sequence>
<comment type="function">
    <text evidence="4 5">Positive regulator of protein phosphatase SIT4. Involved in directing expression of TOR-repressed genes and in dephosphorylation of NPR1 in response to nutrient starvation. Negatively modulates K(+) efflux of the cell by the Na(+)-K(+)/H(+) antiporter NHA1.</text>
</comment>
<comment type="subunit">
    <text>Associates with the SIT4 protein phosphatase catalytic subunit in a cell-cycle-dependent manner.</text>
</comment>
<comment type="interaction">
    <interactant intactId="EBI-16370">
        <id>P43612</id>
    </interactant>
    <interactant intactId="EBI-13707">
        <id>P20604</id>
        <label>SIT4</label>
    </interactant>
    <organismsDiffer>false</organismsDiffer>
    <experiments>10</experiments>
</comment>
<comment type="interaction">
    <interactant intactId="EBI-16370">
        <id>P43612</id>
    </interactant>
    <interactant intactId="EBI-38123">
        <id>Q12199</id>
        <label>TIP41</label>
    </interactant>
    <organismsDiffer>false</organismsDiffer>
    <experiments>3</experiments>
</comment>
<comment type="subcellular location">
    <subcellularLocation>
        <location evidence="2">Cytoplasm</location>
    </subcellularLocation>
</comment>
<comment type="PTM">
    <text>Hyperphosphorylated in the absence of SIT4.</text>
</comment>
<comment type="miscellaneous">
    <text evidence="3">Present with 5960 molecules/cell in log phase SD medium.</text>
</comment>
<comment type="similarity">
    <text evidence="6">Belongs to the SAPS family.</text>
</comment>
<comment type="sequence caution" evidence="6">
    <conflict type="frameshift">
        <sequence resource="EMBL-CDS" id="BAA09279"/>
    </conflict>
</comment>
<keyword id="KW-0131">Cell cycle</keyword>
<keyword id="KW-0963">Cytoplasm</keyword>
<keyword id="KW-0903">Direct protein sequencing</keyword>
<keyword id="KW-0597">Phosphoprotein</keyword>
<keyword id="KW-1185">Reference proteome</keyword>
<protein>
    <recommendedName>
        <fullName>SIT4-associating protein SAP155</fullName>
    </recommendedName>
</protein>
<evidence type="ECO:0000256" key="1">
    <source>
        <dbReference type="SAM" id="MobiDB-lite"/>
    </source>
</evidence>
<evidence type="ECO:0000269" key="2">
    <source>
    </source>
</evidence>
<evidence type="ECO:0000269" key="3">
    <source>
    </source>
</evidence>
<evidence type="ECO:0000269" key="4">
    <source>
    </source>
</evidence>
<evidence type="ECO:0000269" key="5">
    <source>
    </source>
</evidence>
<evidence type="ECO:0000305" key="6"/>
<evidence type="ECO:0007744" key="7">
    <source>
    </source>
</evidence>
<evidence type="ECO:0007744" key="8">
    <source>
    </source>
</evidence>
<evidence type="ECO:0007744" key="9">
    <source>
    </source>
</evidence>
<name>SA155_YEAST</name>
<gene>
    <name type="primary">SAP155</name>
    <name type="ordered locus">YFR040W</name>
</gene>